<accession>B4SBW1</accession>
<reference key="1">
    <citation type="submission" date="2008-06" db="EMBL/GenBank/DDBJ databases">
        <title>Complete sequence of Pelodictyon phaeoclathratiforme BU-1.</title>
        <authorList>
            <consortium name="US DOE Joint Genome Institute"/>
            <person name="Lucas S."/>
            <person name="Copeland A."/>
            <person name="Lapidus A."/>
            <person name="Glavina del Rio T."/>
            <person name="Dalin E."/>
            <person name="Tice H."/>
            <person name="Bruce D."/>
            <person name="Goodwin L."/>
            <person name="Pitluck S."/>
            <person name="Schmutz J."/>
            <person name="Larimer F."/>
            <person name="Land M."/>
            <person name="Hauser L."/>
            <person name="Kyrpides N."/>
            <person name="Mikhailova N."/>
            <person name="Liu Z."/>
            <person name="Li T."/>
            <person name="Zhao F."/>
            <person name="Overmann J."/>
            <person name="Bryant D.A."/>
            <person name="Richardson P."/>
        </authorList>
    </citation>
    <scope>NUCLEOTIDE SEQUENCE [LARGE SCALE GENOMIC DNA]</scope>
    <source>
        <strain>DSM 5477 / BU-1</strain>
    </source>
</reference>
<comment type="function">
    <text evidence="1">One of the primary rRNA binding proteins, it binds directly to 16S rRNA central domain where it helps coordinate assembly of the platform of the 30S subunit.</text>
</comment>
<comment type="subunit">
    <text evidence="1">Part of the 30S ribosomal subunit. Contacts proteins S5 and S12.</text>
</comment>
<comment type="similarity">
    <text evidence="1">Belongs to the universal ribosomal protein uS8 family.</text>
</comment>
<name>RS8_PELPB</name>
<proteinExistence type="inferred from homology"/>
<evidence type="ECO:0000255" key="1">
    <source>
        <dbReference type="HAMAP-Rule" id="MF_01302"/>
    </source>
</evidence>
<evidence type="ECO:0000305" key="2"/>
<organism>
    <name type="scientific">Pelodictyon phaeoclathratiforme (strain DSM 5477 / BU-1)</name>
    <dbReference type="NCBI Taxonomy" id="324925"/>
    <lineage>
        <taxon>Bacteria</taxon>
        <taxon>Pseudomonadati</taxon>
        <taxon>Chlorobiota</taxon>
        <taxon>Chlorobiia</taxon>
        <taxon>Chlorobiales</taxon>
        <taxon>Chlorobiaceae</taxon>
        <taxon>Chlorobium/Pelodictyon group</taxon>
        <taxon>Pelodictyon</taxon>
    </lineage>
</organism>
<sequence>MPVTDSIADYITRIRNAGRAKNKTTDIPYSKLRENLSQLLVEKGYIKNFTVITTEKFPFLRIDLKYTAHGDPAIKEISRVSKPGRRVYDGKDIKKYLGGLGLYILSSSKGVITDKEARAQGVGGEILFRIY</sequence>
<gene>
    <name evidence="1" type="primary">rpsH</name>
    <name type="ordered locus">Ppha_0303</name>
</gene>
<feature type="chain" id="PRO_1000140590" description="Small ribosomal subunit protein uS8">
    <location>
        <begin position="1"/>
        <end position="131"/>
    </location>
</feature>
<dbReference type="EMBL" id="CP001110">
    <property type="protein sequence ID" value="ACF42636.1"/>
    <property type="molecule type" value="Genomic_DNA"/>
</dbReference>
<dbReference type="RefSeq" id="WP_012507132.1">
    <property type="nucleotide sequence ID" value="NC_011060.1"/>
</dbReference>
<dbReference type="SMR" id="B4SBW1"/>
<dbReference type="STRING" id="324925.Ppha_0303"/>
<dbReference type="KEGG" id="pph:Ppha_0303"/>
<dbReference type="eggNOG" id="COG0096">
    <property type="taxonomic scope" value="Bacteria"/>
</dbReference>
<dbReference type="HOGENOM" id="CLU_098428_0_0_10"/>
<dbReference type="OrthoDB" id="9802617at2"/>
<dbReference type="Proteomes" id="UP000002724">
    <property type="component" value="Chromosome"/>
</dbReference>
<dbReference type="GO" id="GO:1990904">
    <property type="term" value="C:ribonucleoprotein complex"/>
    <property type="evidence" value="ECO:0007669"/>
    <property type="project" value="UniProtKB-KW"/>
</dbReference>
<dbReference type="GO" id="GO:0005840">
    <property type="term" value="C:ribosome"/>
    <property type="evidence" value="ECO:0007669"/>
    <property type="project" value="UniProtKB-KW"/>
</dbReference>
<dbReference type="GO" id="GO:0019843">
    <property type="term" value="F:rRNA binding"/>
    <property type="evidence" value="ECO:0007669"/>
    <property type="project" value="UniProtKB-UniRule"/>
</dbReference>
<dbReference type="GO" id="GO:0003735">
    <property type="term" value="F:structural constituent of ribosome"/>
    <property type="evidence" value="ECO:0007669"/>
    <property type="project" value="InterPro"/>
</dbReference>
<dbReference type="GO" id="GO:0006412">
    <property type="term" value="P:translation"/>
    <property type="evidence" value="ECO:0007669"/>
    <property type="project" value="UniProtKB-UniRule"/>
</dbReference>
<dbReference type="FunFam" id="3.30.1490.10:FF:000001">
    <property type="entry name" value="30S ribosomal protein S8"/>
    <property type="match status" value="1"/>
</dbReference>
<dbReference type="Gene3D" id="3.30.1370.30">
    <property type="match status" value="1"/>
</dbReference>
<dbReference type="Gene3D" id="3.30.1490.10">
    <property type="match status" value="1"/>
</dbReference>
<dbReference type="HAMAP" id="MF_01302_B">
    <property type="entry name" value="Ribosomal_uS8_B"/>
    <property type="match status" value="1"/>
</dbReference>
<dbReference type="InterPro" id="IPR000630">
    <property type="entry name" value="Ribosomal_uS8"/>
</dbReference>
<dbReference type="InterPro" id="IPR047863">
    <property type="entry name" value="Ribosomal_uS8_CS"/>
</dbReference>
<dbReference type="InterPro" id="IPR035987">
    <property type="entry name" value="Ribosomal_uS8_sf"/>
</dbReference>
<dbReference type="NCBIfam" id="NF001109">
    <property type="entry name" value="PRK00136.1"/>
    <property type="match status" value="1"/>
</dbReference>
<dbReference type="PANTHER" id="PTHR11758">
    <property type="entry name" value="40S RIBOSOMAL PROTEIN S15A"/>
    <property type="match status" value="1"/>
</dbReference>
<dbReference type="Pfam" id="PF00410">
    <property type="entry name" value="Ribosomal_S8"/>
    <property type="match status" value="1"/>
</dbReference>
<dbReference type="SUPFAM" id="SSF56047">
    <property type="entry name" value="Ribosomal protein S8"/>
    <property type="match status" value="1"/>
</dbReference>
<dbReference type="PROSITE" id="PS00053">
    <property type="entry name" value="RIBOSOMAL_S8"/>
    <property type="match status" value="1"/>
</dbReference>
<protein>
    <recommendedName>
        <fullName evidence="1">Small ribosomal subunit protein uS8</fullName>
    </recommendedName>
    <alternativeName>
        <fullName evidence="2">30S ribosomal protein S8</fullName>
    </alternativeName>
</protein>
<keyword id="KW-1185">Reference proteome</keyword>
<keyword id="KW-0687">Ribonucleoprotein</keyword>
<keyword id="KW-0689">Ribosomal protein</keyword>
<keyword id="KW-0694">RNA-binding</keyword>
<keyword id="KW-0699">rRNA-binding</keyword>